<accession>Q0HPG1</accession>
<proteinExistence type="inferred from homology"/>
<protein>
    <recommendedName>
        <fullName evidence="1">ATP synthase subunit beta</fullName>
        <ecNumber evidence="1">7.1.2.2</ecNumber>
    </recommendedName>
    <alternativeName>
        <fullName evidence="1">ATP synthase F1 sector subunit beta</fullName>
    </alternativeName>
    <alternativeName>
        <fullName evidence="1">F-ATPase subunit beta</fullName>
    </alternativeName>
</protein>
<name>ATPB_SHESR</name>
<evidence type="ECO:0000255" key="1">
    <source>
        <dbReference type="HAMAP-Rule" id="MF_01347"/>
    </source>
</evidence>
<reference key="1">
    <citation type="submission" date="2006-08" db="EMBL/GenBank/DDBJ databases">
        <title>Complete sequence of chromosome 1 of Shewanella sp. MR-7.</title>
        <authorList>
            <person name="Copeland A."/>
            <person name="Lucas S."/>
            <person name="Lapidus A."/>
            <person name="Barry K."/>
            <person name="Detter J.C."/>
            <person name="Glavina del Rio T."/>
            <person name="Hammon N."/>
            <person name="Israni S."/>
            <person name="Dalin E."/>
            <person name="Tice H."/>
            <person name="Pitluck S."/>
            <person name="Kiss H."/>
            <person name="Brettin T."/>
            <person name="Bruce D."/>
            <person name="Han C."/>
            <person name="Tapia R."/>
            <person name="Gilna P."/>
            <person name="Schmutz J."/>
            <person name="Larimer F."/>
            <person name="Land M."/>
            <person name="Hauser L."/>
            <person name="Kyrpides N."/>
            <person name="Mikhailova N."/>
            <person name="Nealson K."/>
            <person name="Konstantinidis K."/>
            <person name="Klappenbach J."/>
            <person name="Tiedje J."/>
            <person name="Richardson P."/>
        </authorList>
    </citation>
    <scope>NUCLEOTIDE SEQUENCE [LARGE SCALE GENOMIC DNA]</scope>
    <source>
        <strain>MR-7</strain>
    </source>
</reference>
<gene>
    <name evidence="1" type="primary">atpD</name>
    <name type="ordered locus">Shewmr7_4017</name>
</gene>
<sequence>MSTGTVVQVIGAVVDVEFPQDAVPQVYDALKITGEGSCNGLVLEVQQQLGGGVVRTIAMGTSDGLRRGLEVVNSGSPISVPVGTATLGRIMNVLGEPIDEAGAIGEEERYVIHRSAPSYEDQSNTTELLETGIKVIDLVCPFAKGGKVGLFGGAGVGKTVNMMELINNIAKAHSGLSVFAGVGERTREGNDFYYEMKDSGVLDKVAMVYGQMNEPPGNRLRVALTGLTMAEKFRDEGRDVLLFVDNIYRYTLAGTEVSALLGRMPSAVGYQPTLAEEMGVLQERITSTKTGSITSVQAVYVPADDLTDPSPATTFAHLDATVVLSRQIASLGIYPAVDPLDSTSRQLDPLVVGQEHYDVANGVQTVLQRYKELKDIIAILGMDELSDDDKMTVSRARKIERFLSQPFHVAEVFTGSPGKYVSLKDTIRGFKGILSGEFDHIPEQAFYMVGSIDEAVEKANKKK</sequence>
<comment type="function">
    <text evidence="1">Produces ATP from ADP in the presence of a proton gradient across the membrane. The catalytic sites are hosted primarily by the beta subunits.</text>
</comment>
<comment type="catalytic activity">
    <reaction evidence="1">
        <text>ATP + H2O + 4 H(+)(in) = ADP + phosphate + 5 H(+)(out)</text>
        <dbReference type="Rhea" id="RHEA:57720"/>
        <dbReference type="ChEBI" id="CHEBI:15377"/>
        <dbReference type="ChEBI" id="CHEBI:15378"/>
        <dbReference type="ChEBI" id="CHEBI:30616"/>
        <dbReference type="ChEBI" id="CHEBI:43474"/>
        <dbReference type="ChEBI" id="CHEBI:456216"/>
        <dbReference type="EC" id="7.1.2.2"/>
    </reaction>
</comment>
<comment type="subunit">
    <text evidence="1">F-type ATPases have 2 components, CF(1) - the catalytic core - and CF(0) - the membrane proton channel. CF(1) has five subunits: alpha(3), beta(3), gamma(1), delta(1), epsilon(1). CF(0) has three main subunits: a(1), b(2) and c(9-12). The alpha and beta chains form an alternating ring which encloses part of the gamma chain. CF(1) is attached to CF(0) by a central stalk formed by the gamma and epsilon chains, while a peripheral stalk is formed by the delta and b chains.</text>
</comment>
<comment type="subcellular location">
    <subcellularLocation>
        <location evidence="1">Cell inner membrane</location>
        <topology evidence="1">Peripheral membrane protein</topology>
    </subcellularLocation>
</comment>
<comment type="similarity">
    <text evidence="1">Belongs to the ATPase alpha/beta chains family.</text>
</comment>
<feature type="chain" id="PRO_1000055165" description="ATP synthase subunit beta">
    <location>
        <begin position="1"/>
        <end position="463"/>
    </location>
</feature>
<feature type="binding site" evidence="1">
    <location>
        <begin position="152"/>
        <end position="159"/>
    </location>
    <ligand>
        <name>ATP</name>
        <dbReference type="ChEBI" id="CHEBI:30616"/>
    </ligand>
</feature>
<keyword id="KW-0066">ATP synthesis</keyword>
<keyword id="KW-0067">ATP-binding</keyword>
<keyword id="KW-0997">Cell inner membrane</keyword>
<keyword id="KW-1003">Cell membrane</keyword>
<keyword id="KW-0139">CF(1)</keyword>
<keyword id="KW-0375">Hydrogen ion transport</keyword>
<keyword id="KW-0406">Ion transport</keyword>
<keyword id="KW-0472">Membrane</keyword>
<keyword id="KW-0547">Nucleotide-binding</keyword>
<keyword id="KW-1278">Translocase</keyword>
<keyword id="KW-0813">Transport</keyword>
<dbReference type="EC" id="7.1.2.2" evidence="1"/>
<dbReference type="EMBL" id="CP000444">
    <property type="protein sequence ID" value="ABI44994.1"/>
    <property type="molecule type" value="Genomic_DNA"/>
</dbReference>
<dbReference type="SMR" id="Q0HPG1"/>
<dbReference type="KEGG" id="shm:Shewmr7_4017"/>
<dbReference type="HOGENOM" id="CLU_022398_0_2_6"/>
<dbReference type="GO" id="GO:0005886">
    <property type="term" value="C:plasma membrane"/>
    <property type="evidence" value="ECO:0007669"/>
    <property type="project" value="UniProtKB-SubCell"/>
</dbReference>
<dbReference type="GO" id="GO:0045259">
    <property type="term" value="C:proton-transporting ATP synthase complex"/>
    <property type="evidence" value="ECO:0007669"/>
    <property type="project" value="UniProtKB-KW"/>
</dbReference>
<dbReference type="GO" id="GO:0005524">
    <property type="term" value="F:ATP binding"/>
    <property type="evidence" value="ECO:0007669"/>
    <property type="project" value="UniProtKB-UniRule"/>
</dbReference>
<dbReference type="GO" id="GO:0016887">
    <property type="term" value="F:ATP hydrolysis activity"/>
    <property type="evidence" value="ECO:0007669"/>
    <property type="project" value="InterPro"/>
</dbReference>
<dbReference type="GO" id="GO:0046933">
    <property type="term" value="F:proton-transporting ATP synthase activity, rotational mechanism"/>
    <property type="evidence" value="ECO:0007669"/>
    <property type="project" value="UniProtKB-UniRule"/>
</dbReference>
<dbReference type="CDD" id="cd18110">
    <property type="entry name" value="ATP-synt_F1_beta_C"/>
    <property type="match status" value="1"/>
</dbReference>
<dbReference type="CDD" id="cd18115">
    <property type="entry name" value="ATP-synt_F1_beta_N"/>
    <property type="match status" value="1"/>
</dbReference>
<dbReference type="CDD" id="cd01133">
    <property type="entry name" value="F1-ATPase_beta_CD"/>
    <property type="match status" value="1"/>
</dbReference>
<dbReference type="FunFam" id="1.10.1140.10:FF:000001">
    <property type="entry name" value="ATP synthase subunit beta"/>
    <property type="match status" value="1"/>
</dbReference>
<dbReference type="FunFam" id="2.40.10.170:FF:000003">
    <property type="entry name" value="ATP synthase subunit beta"/>
    <property type="match status" value="1"/>
</dbReference>
<dbReference type="FunFam" id="3.40.50.300:FF:000004">
    <property type="entry name" value="ATP synthase subunit beta"/>
    <property type="match status" value="1"/>
</dbReference>
<dbReference type="Gene3D" id="2.40.10.170">
    <property type="match status" value="1"/>
</dbReference>
<dbReference type="Gene3D" id="1.10.1140.10">
    <property type="entry name" value="Bovine Mitochondrial F1-atpase, Atp Synthase Beta Chain, Chain D, domain 3"/>
    <property type="match status" value="1"/>
</dbReference>
<dbReference type="Gene3D" id="3.40.50.300">
    <property type="entry name" value="P-loop containing nucleotide triphosphate hydrolases"/>
    <property type="match status" value="1"/>
</dbReference>
<dbReference type="HAMAP" id="MF_01347">
    <property type="entry name" value="ATP_synth_beta_bact"/>
    <property type="match status" value="1"/>
</dbReference>
<dbReference type="InterPro" id="IPR003593">
    <property type="entry name" value="AAA+_ATPase"/>
</dbReference>
<dbReference type="InterPro" id="IPR055190">
    <property type="entry name" value="ATP-synt_VA_C"/>
</dbReference>
<dbReference type="InterPro" id="IPR005722">
    <property type="entry name" value="ATP_synth_F1_bsu"/>
</dbReference>
<dbReference type="InterPro" id="IPR020003">
    <property type="entry name" value="ATPase_a/bsu_AS"/>
</dbReference>
<dbReference type="InterPro" id="IPR050053">
    <property type="entry name" value="ATPase_alpha/beta_chains"/>
</dbReference>
<dbReference type="InterPro" id="IPR004100">
    <property type="entry name" value="ATPase_F1/V1/A1_a/bsu_N"/>
</dbReference>
<dbReference type="InterPro" id="IPR036121">
    <property type="entry name" value="ATPase_F1/V1/A1_a/bsu_N_sf"/>
</dbReference>
<dbReference type="InterPro" id="IPR000194">
    <property type="entry name" value="ATPase_F1/V1/A1_a/bsu_nucl-bd"/>
</dbReference>
<dbReference type="InterPro" id="IPR024034">
    <property type="entry name" value="ATPase_F1/V1_b/a_C"/>
</dbReference>
<dbReference type="InterPro" id="IPR027417">
    <property type="entry name" value="P-loop_NTPase"/>
</dbReference>
<dbReference type="NCBIfam" id="TIGR01039">
    <property type="entry name" value="atpD"/>
    <property type="match status" value="1"/>
</dbReference>
<dbReference type="PANTHER" id="PTHR15184">
    <property type="entry name" value="ATP SYNTHASE"/>
    <property type="match status" value="1"/>
</dbReference>
<dbReference type="PANTHER" id="PTHR15184:SF71">
    <property type="entry name" value="ATP SYNTHASE SUBUNIT BETA, MITOCHONDRIAL"/>
    <property type="match status" value="1"/>
</dbReference>
<dbReference type="Pfam" id="PF00006">
    <property type="entry name" value="ATP-synt_ab"/>
    <property type="match status" value="1"/>
</dbReference>
<dbReference type="Pfam" id="PF02874">
    <property type="entry name" value="ATP-synt_ab_N"/>
    <property type="match status" value="1"/>
</dbReference>
<dbReference type="Pfam" id="PF22919">
    <property type="entry name" value="ATP-synt_VA_C"/>
    <property type="match status" value="1"/>
</dbReference>
<dbReference type="SMART" id="SM00382">
    <property type="entry name" value="AAA"/>
    <property type="match status" value="1"/>
</dbReference>
<dbReference type="SUPFAM" id="SSF47917">
    <property type="entry name" value="C-terminal domain of alpha and beta subunits of F1 ATP synthase"/>
    <property type="match status" value="1"/>
</dbReference>
<dbReference type="SUPFAM" id="SSF50615">
    <property type="entry name" value="N-terminal domain of alpha and beta subunits of F1 ATP synthase"/>
    <property type="match status" value="1"/>
</dbReference>
<dbReference type="SUPFAM" id="SSF52540">
    <property type="entry name" value="P-loop containing nucleoside triphosphate hydrolases"/>
    <property type="match status" value="1"/>
</dbReference>
<dbReference type="PROSITE" id="PS00152">
    <property type="entry name" value="ATPASE_ALPHA_BETA"/>
    <property type="match status" value="1"/>
</dbReference>
<organism>
    <name type="scientific">Shewanella sp. (strain MR-7)</name>
    <dbReference type="NCBI Taxonomy" id="60481"/>
    <lineage>
        <taxon>Bacteria</taxon>
        <taxon>Pseudomonadati</taxon>
        <taxon>Pseudomonadota</taxon>
        <taxon>Gammaproteobacteria</taxon>
        <taxon>Alteromonadales</taxon>
        <taxon>Shewanellaceae</taxon>
        <taxon>Shewanella</taxon>
    </lineage>
</organism>